<feature type="chain" id="PRO_0000294108" description="Purine ribonucleoside efflux pump NepI">
    <location>
        <begin position="1"/>
        <end position="396"/>
    </location>
</feature>
<feature type="topological domain" description="Cytoplasmic" evidence="1">
    <location>
        <begin position="1"/>
        <end position="21"/>
    </location>
</feature>
<feature type="transmembrane region" description="Helical" evidence="1">
    <location>
        <begin position="22"/>
        <end position="42"/>
    </location>
</feature>
<feature type="topological domain" description="Periplasmic" evidence="1">
    <location>
        <begin position="43"/>
        <end position="54"/>
    </location>
</feature>
<feature type="transmembrane region" description="Helical" evidence="1">
    <location>
        <begin position="55"/>
        <end position="75"/>
    </location>
</feature>
<feature type="topological domain" description="Cytoplasmic" evidence="1">
    <location>
        <begin position="76"/>
        <end position="85"/>
    </location>
</feature>
<feature type="transmembrane region" description="Helical" evidence="1">
    <location>
        <begin position="86"/>
        <end position="106"/>
    </location>
</feature>
<feature type="topological domain" description="Periplasmic" evidence="1">
    <location>
        <position position="107"/>
    </location>
</feature>
<feature type="transmembrane region" description="Helical" evidence="1">
    <location>
        <begin position="108"/>
        <end position="128"/>
    </location>
</feature>
<feature type="topological domain" description="Cytoplasmic" evidence="1">
    <location>
        <begin position="129"/>
        <end position="147"/>
    </location>
</feature>
<feature type="transmembrane region" description="Helical" evidence="1">
    <location>
        <begin position="148"/>
        <end position="168"/>
    </location>
</feature>
<feature type="topological domain" description="Periplasmic" evidence="1">
    <location>
        <begin position="169"/>
        <end position="175"/>
    </location>
</feature>
<feature type="transmembrane region" description="Helical" evidence="1">
    <location>
        <begin position="176"/>
        <end position="196"/>
    </location>
</feature>
<feature type="topological domain" description="Cytoplasmic" evidence="1">
    <location>
        <begin position="197"/>
        <end position="215"/>
    </location>
</feature>
<feature type="transmembrane region" description="Helical" evidence="1">
    <location>
        <begin position="216"/>
        <end position="236"/>
    </location>
</feature>
<feature type="topological domain" description="Periplasmic" evidence="1">
    <location>
        <begin position="237"/>
        <end position="255"/>
    </location>
</feature>
<feature type="transmembrane region" description="Helical" evidence="1">
    <location>
        <begin position="256"/>
        <end position="276"/>
    </location>
</feature>
<feature type="topological domain" description="Cytoplasmic" evidence="1">
    <location>
        <begin position="277"/>
        <end position="281"/>
    </location>
</feature>
<feature type="transmembrane region" description="Helical" evidence="1">
    <location>
        <begin position="282"/>
        <end position="302"/>
    </location>
</feature>
<feature type="topological domain" description="Periplasmic" evidence="1">
    <location>
        <begin position="303"/>
        <end position="305"/>
    </location>
</feature>
<feature type="transmembrane region" description="Helical" evidence="1">
    <location>
        <begin position="306"/>
        <end position="326"/>
    </location>
</feature>
<feature type="topological domain" description="Cytoplasmic" evidence="1">
    <location>
        <begin position="327"/>
        <end position="343"/>
    </location>
</feature>
<feature type="transmembrane region" description="Helical" evidence="1">
    <location>
        <begin position="344"/>
        <end position="364"/>
    </location>
</feature>
<feature type="topological domain" description="Periplasmic" evidence="1">
    <location>
        <begin position="365"/>
        <end position="366"/>
    </location>
</feature>
<feature type="transmembrane region" description="Helical" evidence="1">
    <location>
        <begin position="367"/>
        <end position="387"/>
    </location>
</feature>
<feature type="topological domain" description="Cytoplasmic" evidence="1">
    <location>
        <begin position="388"/>
        <end position="396"/>
    </location>
</feature>
<evidence type="ECO:0000255" key="1">
    <source>
        <dbReference type="HAMAP-Rule" id="MF_01189"/>
    </source>
</evidence>
<evidence type="ECO:0000305" key="2"/>
<comment type="function">
    <text evidence="1">Involved in the efflux of purine ribonucleosides, such as inosine and guanosine.</text>
</comment>
<comment type="catalytic activity">
    <reaction evidence="1">
        <text>inosine(in) + H(+)(out) = inosine(out) + H(+)(in)</text>
        <dbReference type="Rhea" id="RHEA:29211"/>
        <dbReference type="ChEBI" id="CHEBI:15378"/>
        <dbReference type="ChEBI" id="CHEBI:17596"/>
    </reaction>
    <physiologicalReaction direction="left-to-right" evidence="1">
        <dbReference type="Rhea" id="RHEA:29212"/>
    </physiologicalReaction>
</comment>
<comment type="catalytic activity">
    <reaction evidence="1">
        <text>guanosine(in) + H(+)(out) = guanosine(out) + H(+)(in)</text>
        <dbReference type="Rhea" id="RHEA:29583"/>
        <dbReference type="ChEBI" id="CHEBI:15378"/>
        <dbReference type="ChEBI" id="CHEBI:16750"/>
    </reaction>
    <physiologicalReaction direction="left-to-right" evidence="1">
        <dbReference type="Rhea" id="RHEA:29584"/>
    </physiologicalReaction>
</comment>
<comment type="subcellular location">
    <subcellularLocation>
        <location evidence="1">Cell inner membrane</location>
        <topology evidence="1">Multi-pass membrane protein</topology>
    </subcellularLocation>
</comment>
<comment type="similarity">
    <text evidence="1">Belongs to the major facilitator superfamily. DHA1 family. NepI (TC 2.A.1.2.26) subfamily.</text>
</comment>
<comment type="sequence caution" evidence="2">
    <conflict type="erroneous initiation">
        <sequence resource="EMBL-CDS" id="ABE09645"/>
    </conflict>
</comment>
<keyword id="KW-0050">Antiport</keyword>
<keyword id="KW-0997">Cell inner membrane</keyword>
<keyword id="KW-1003">Cell membrane</keyword>
<keyword id="KW-0472">Membrane</keyword>
<keyword id="KW-0812">Transmembrane</keyword>
<keyword id="KW-1133">Transmembrane helix</keyword>
<keyword id="KW-0813">Transport</keyword>
<protein>
    <recommendedName>
        <fullName evidence="1">Purine ribonucleoside efflux pump NepI</fullName>
    </recommendedName>
</protein>
<reference key="1">
    <citation type="journal article" date="2006" name="Proc. Natl. Acad. Sci. U.S.A.">
        <title>Identification of genes subject to positive selection in uropathogenic strains of Escherichia coli: a comparative genomics approach.</title>
        <authorList>
            <person name="Chen S.L."/>
            <person name="Hung C.-S."/>
            <person name="Xu J."/>
            <person name="Reigstad C.S."/>
            <person name="Magrini V."/>
            <person name="Sabo A."/>
            <person name="Blasiar D."/>
            <person name="Bieri T."/>
            <person name="Meyer R.R."/>
            <person name="Ozersky P."/>
            <person name="Armstrong J.R."/>
            <person name="Fulton R.S."/>
            <person name="Latreille J.P."/>
            <person name="Spieth J."/>
            <person name="Hooton T.M."/>
            <person name="Mardis E.R."/>
            <person name="Hultgren S.J."/>
            <person name="Gordon J.I."/>
        </authorList>
    </citation>
    <scope>NUCLEOTIDE SEQUENCE [LARGE SCALE GENOMIC DNA]</scope>
    <source>
        <strain>UTI89 / UPEC</strain>
    </source>
</reference>
<proteinExistence type="inferred from homology"/>
<dbReference type="EMBL" id="CP000243">
    <property type="protein sequence ID" value="ABE09645.1"/>
    <property type="status" value="ALT_INIT"/>
    <property type="molecule type" value="Genomic_DNA"/>
</dbReference>
<dbReference type="RefSeq" id="WP_011478308.1">
    <property type="nucleotide sequence ID" value="NZ_CP064825.1"/>
</dbReference>
<dbReference type="SMR" id="Q1R4R9"/>
<dbReference type="KEGG" id="eci:UTI89_C4218"/>
<dbReference type="HOGENOM" id="CLU_001265_61_1_6"/>
<dbReference type="Proteomes" id="UP000001952">
    <property type="component" value="Chromosome"/>
</dbReference>
<dbReference type="GO" id="GO:0005886">
    <property type="term" value="C:plasma membrane"/>
    <property type="evidence" value="ECO:0007669"/>
    <property type="project" value="UniProtKB-SubCell"/>
</dbReference>
<dbReference type="GO" id="GO:0015297">
    <property type="term" value="F:antiporter activity"/>
    <property type="evidence" value="ECO:0007669"/>
    <property type="project" value="UniProtKB-KW"/>
</dbReference>
<dbReference type="GO" id="GO:0015211">
    <property type="term" value="F:purine nucleoside transmembrane transporter activity"/>
    <property type="evidence" value="ECO:0007669"/>
    <property type="project" value="UniProtKB-UniRule"/>
</dbReference>
<dbReference type="CDD" id="cd17324">
    <property type="entry name" value="MFS_NepI_like"/>
    <property type="match status" value="1"/>
</dbReference>
<dbReference type="FunFam" id="1.20.1250.20:FF:000113">
    <property type="entry name" value="Purine ribonucleoside efflux pump NepI"/>
    <property type="match status" value="1"/>
</dbReference>
<dbReference type="Gene3D" id="1.20.1250.20">
    <property type="entry name" value="MFS general substrate transporter like domains"/>
    <property type="match status" value="1"/>
</dbReference>
<dbReference type="HAMAP" id="MF_01189">
    <property type="entry name" value="MFS_NepI"/>
    <property type="match status" value="1"/>
</dbReference>
<dbReference type="InterPro" id="IPR011701">
    <property type="entry name" value="MFS"/>
</dbReference>
<dbReference type="InterPro" id="IPR020846">
    <property type="entry name" value="MFS_dom"/>
</dbReference>
<dbReference type="InterPro" id="IPR050189">
    <property type="entry name" value="MFS_Efflux_Transporters"/>
</dbReference>
<dbReference type="InterPro" id="IPR023680">
    <property type="entry name" value="MFS_NepI"/>
</dbReference>
<dbReference type="InterPro" id="IPR036259">
    <property type="entry name" value="MFS_trans_sf"/>
</dbReference>
<dbReference type="NCBIfam" id="NF007578">
    <property type="entry name" value="PRK10213.1"/>
    <property type="match status" value="1"/>
</dbReference>
<dbReference type="PANTHER" id="PTHR43124">
    <property type="entry name" value="PURINE EFFLUX PUMP PBUE"/>
    <property type="match status" value="1"/>
</dbReference>
<dbReference type="PANTHER" id="PTHR43124:SF5">
    <property type="entry name" value="PURINE RIBONUCLEOSIDE EFFLUX PUMP NEPI"/>
    <property type="match status" value="1"/>
</dbReference>
<dbReference type="Pfam" id="PF07690">
    <property type="entry name" value="MFS_1"/>
    <property type="match status" value="1"/>
</dbReference>
<dbReference type="SUPFAM" id="SSF103473">
    <property type="entry name" value="MFS general substrate transporter"/>
    <property type="match status" value="1"/>
</dbReference>
<dbReference type="PROSITE" id="PS50850">
    <property type="entry name" value="MFS"/>
    <property type="match status" value="1"/>
</dbReference>
<organism>
    <name type="scientific">Escherichia coli (strain UTI89 / UPEC)</name>
    <dbReference type="NCBI Taxonomy" id="364106"/>
    <lineage>
        <taxon>Bacteria</taxon>
        <taxon>Pseudomonadati</taxon>
        <taxon>Pseudomonadota</taxon>
        <taxon>Gammaproteobacteria</taxon>
        <taxon>Enterobacterales</taxon>
        <taxon>Enterobacteriaceae</taxon>
        <taxon>Escherichia</taxon>
    </lineage>
</organism>
<name>NEPI_ECOUT</name>
<gene>
    <name evidence="1" type="primary">nepI</name>
    <name type="ordered locus">UTI89_C4218</name>
</gene>
<sequence length="396" mass="41848">MSEFIAENRGADAITRPNWSAVFSVAFCVACLIIVEFLPVSLLTPMAQDLGISEGVAGQSVTVTAFVAMFASLFITQTIQATDRRYVVILFAVLLTLSCLLVSFANSFSLLLIGRACLGLALGGFWAMSASLTMRLVPPRTVPKALSVIFGAVSIALVIAAPLGSFLGELIGWRNVFNAAAAMGVLCIFWIIKSLPSLPGEPSHQKQNTFRLLQRPGVMAGMIAIFMSFAGQFAFFTYIRPVYMNLAGFGVDGLTLVLLSFGIASFVGTSLSSFILKRSVKLALAGAPFVLALSALVLTLWGSDKIVATGVAIIWGLTFALIPVGWSTWITRSLADQAEKAGSIQVAVIQLANTCGAAIGGYALDNIGLTSPLMLSGTLMLLTALLVTAKVKMKKS</sequence>
<accession>Q1R4R9</accession>